<evidence type="ECO:0000255" key="1"/>
<evidence type="ECO:0000305" key="2"/>
<gene>
    <name type="primary">flaA</name>
    <name type="ordered locus">VC0395_A1780</name>
    <name type="ordered locus">VC395_2304</name>
</gene>
<sequence length="379" mass="40383">MTINVNTNVSAMTAQRYLTKATGELNTSMERLSSGNRINSAKDDAAGLQISNRLTAQSRGLDVAMRNANDGISIAQTAEGAMNESTSILQRMRDLALQSANGTNSASERQALNEESVALQDELNRIAETTSFGGRKLLNGSFGEASFQIGSSSGEAIIMGLTSVRADDFRMGGQSFIAEQPKTKEWGVPPTARDLKFEFTKKDGEAVVLDIIAKDGDDIEELATYINGQTDLFKASVDQEGKLQIFVAEPNIEGNFNISGGLATELGLNGGPGVKTTVQDIDITSVGGSQNAVGIIDAALKYVDSQRADLGAKQNRLSHSISNLSNIQENVEASKSRIKDTDFAKETTQLTKSQILQQAGTSILAQAKQLPNSAISLLQ</sequence>
<keyword id="KW-0975">Bacterial flagellum</keyword>
<keyword id="KW-0175">Coiled coil</keyword>
<keyword id="KW-0964">Secreted</keyword>
<keyword id="KW-0843">Virulence</keyword>
<organism>
    <name type="scientific">Vibrio cholerae serotype O1 (strain ATCC 39541 / Classical Ogawa 395 / O395)</name>
    <dbReference type="NCBI Taxonomy" id="345073"/>
    <lineage>
        <taxon>Bacteria</taxon>
        <taxon>Pseudomonadati</taxon>
        <taxon>Pseudomonadota</taxon>
        <taxon>Gammaproteobacteria</taxon>
        <taxon>Vibrionales</taxon>
        <taxon>Vibrionaceae</taxon>
        <taxon>Vibrio</taxon>
    </lineage>
</organism>
<comment type="function">
    <text>Flagellin is the subunit protein which polymerizes to form the filaments of bacterial flagella. FlaA is required to form a core or scaffold into which the other flagellins are inserted to provide structural integrity. Essential for flagellar synthesis and motility; important for full virulence.</text>
</comment>
<comment type="subunit">
    <text>Heteromer of multiple flagellin subunits including FlaA, FlaB, FlaC, FlaD and FlaE.</text>
</comment>
<comment type="subcellular location">
    <subcellularLocation>
        <location>Secreted</location>
    </subcellularLocation>
    <subcellularLocation>
        <location>Bacterial flagellum</location>
    </subcellularLocation>
</comment>
<comment type="miscellaneous">
    <text>V.cholerae is able to differentially regulate the flagellins within the flagellum maybe to produce flagella which are particularly suited for motility within a given environment. A flagellar filament composed exclusively of FlaA is fragile and easily broken.</text>
</comment>
<comment type="similarity">
    <text evidence="2">Belongs to the bacterial flagellin family.</text>
</comment>
<protein>
    <recommendedName>
        <fullName>Flagellin A</fullName>
    </recommendedName>
    <alternativeName>
        <fullName>Flagellin core protein</fullName>
    </alternativeName>
</protein>
<proteinExistence type="inferred from homology"/>
<feature type="chain" id="PRO_0000321846" description="Flagellin A">
    <location>
        <begin position="1"/>
        <end position="379"/>
    </location>
</feature>
<feature type="coiled-coil region" evidence="1">
    <location>
        <begin position="104"/>
        <end position="129"/>
    </location>
</feature>
<feature type="coiled-coil region" evidence="1">
    <location>
        <begin position="314"/>
        <end position="341"/>
    </location>
</feature>
<feature type="sequence conflict" description="In Ref. 1; AAC01552." evidence="2" ref="1">
    <original>Q</original>
    <variation>H</variation>
    <location>
        <position position="354"/>
    </location>
</feature>
<accession>A5F672</accession>
<accession>C3M3E5</accession>
<accession>O30858</accession>
<accession>O34220</accession>
<dbReference type="EMBL" id="AF007121">
    <property type="protein sequence ID" value="AAC01552.1"/>
    <property type="molecule type" value="Genomic_DNA"/>
</dbReference>
<dbReference type="EMBL" id="CP000627">
    <property type="protein sequence ID" value="ABQ20940.1"/>
    <property type="molecule type" value="Genomic_DNA"/>
</dbReference>
<dbReference type="EMBL" id="CP001235">
    <property type="protein sequence ID" value="ACP10294.1"/>
    <property type="molecule type" value="Genomic_DNA"/>
</dbReference>
<dbReference type="RefSeq" id="WP_000154827.1">
    <property type="nucleotide sequence ID" value="NZ_JAACZH010000022.1"/>
</dbReference>
<dbReference type="SMR" id="A5F672"/>
<dbReference type="KEGG" id="vco:VC0395_A1780"/>
<dbReference type="KEGG" id="vcr:VC395_2304"/>
<dbReference type="PATRIC" id="fig|345073.21.peg.2220"/>
<dbReference type="eggNOG" id="COG1344">
    <property type="taxonomic scope" value="Bacteria"/>
</dbReference>
<dbReference type="HOGENOM" id="CLU_011142_7_1_6"/>
<dbReference type="OrthoDB" id="9796789at2"/>
<dbReference type="Proteomes" id="UP000000249">
    <property type="component" value="Chromosome 2"/>
</dbReference>
<dbReference type="GO" id="GO:0009288">
    <property type="term" value="C:bacterial-type flagellum"/>
    <property type="evidence" value="ECO:0007669"/>
    <property type="project" value="UniProtKB-SubCell"/>
</dbReference>
<dbReference type="GO" id="GO:0005576">
    <property type="term" value="C:extracellular region"/>
    <property type="evidence" value="ECO:0007669"/>
    <property type="project" value="UniProtKB-SubCell"/>
</dbReference>
<dbReference type="GO" id="GO:0005198">
    <property type="term" value="F:structural molecule activity"/>
    <property type="evidence" value="ECO:0007669"/>
    <property type="project" value="InterPro"/>
</dbReference>
<dbReference type="Gene3D" id="2.60.40.4390">
    <property type="match status" value="1"/>
</dbReference>
<dbReference type="Gene3D" id="6.10.280.190">
    <property type="match status" value="1"/>
</dbReference>
<dbReference type="Gene3D" id="1.20.1330.10">
    <property type="entry name" value="f41 fragment of flagellin, N-terminal domain"/>
    <property type="match status" value="1"/>
</dbReference>
<dbReference type="Gene3D" id="6.10.10.10">
    <property type="entry name" value="Flagellar export chaperone, C-terminal domain"/>
    <property type="match status" value="1"/>
</dbReference>
<dbReference type="InterPro" id="IPR001492">
    <property type="entry name" value="Flagellin"/>
</dbReference>
<dbReference type="InterPro" id="IPR046358">
    <property type="entry name" value="Flagellin_C"/>
</dbReference>
<dbReference type="InterPro" id="IPR042187">
    <property type="entry name" value="Flagellin_C_sub2"/>
</dbReference>
<dbReference type="InterPro" id="IPR010810">
    <property type="entry name" value="Flagellin_hook_IN_motif"/>
</dbReference>
<dbReference type="InterPro" id="IPR001029">
    <property type="entry name" value="Flagellin_N"/>
</dbReference>
<dbReference type="NCBIfam" id="NF006466">
    <property type="entry name" value="PRK08869.1-1"/>
    <property type="match status" value="1"/>
</dbReference>
<dbReference type="NCBIfam" id="NF006468">
    <property type="entry name" value="PRK08869.1-3"/>
    <property type="match status" value="1"/>
</dbReference>
<dbReference type="PANTHER" id="PTHR42792">
    <property type="entry name" value="FLAGELLIN"/>
    <property type="match status" value="1"/>
</dbReference>
<dbReference type="PANTHER" id="PTHR42792:SF2">
    <property type="entry name" value="FLAGELLIN"/>
    <property type="match status" value="1"/>
</dbReference>
<dbReference type="Pfam" id="PF00700">
    <property type="entry name" value="Flagellin_C"/>
    <property type="match status" value="1"/>
</dbReference>
<dbReference type="Pfam" id="PF07196">
    <property type="entry name" value="Flagellin_IN"/>
    <property type="match status" value="1"/>
</dbReference>
<dbReference type="Pfam" id="PF00669">
    <property type="entry name" value="Flagellin_N"/>
    <property type="match status" value="1"/>
</dbReference>
<dbReference type="PRINTS" id="PR00207">
    <property type="entry name" value="FLAGELLIN"/>
</dbReference>
<dbReference type="SUPFAM" id="SSF64518">
    <property type="entry name" value="Phase 1 flagellin"/>
    <property type="match status" value="1"/>
</dbReference>
<name>FLAA_VIBC3</name>
<reference key="1">
    <citation type="journal article" date="1998" name="J. Bacteriol.">
        <title>Differential regulation of multiple flagellins in Vibrio cholerae.</title>
        <authorList>
            <person name="Klose K.E."/>
            <person name="Mekalanos J.J."/>
        </authorList>
    </citation>
    <scope>NUCLEOTIDE SEQUENCE [GENOMIC DNA]</scope>
</reference>
<reference key="2">
    <citation type="submission" date="2007-03" db="EMBL/GenBank/DDBJ databases">
        <authorList>
            <person name="Heidelberg J."/>
        </authorList>
    </citation>
    <scope>NUCLEOTIDE SEQUENCE [LARGE SCALE GENOMIC DNA]</scope>
    <source>
        <strain>ATCC 39541 / Classical Ogawa 395 / O395</strain>
    </source>
</reference>
<reference key="3">
    <citation type="journal article" date="2008" name="PLoS ONE">
        <title>A recalibrated molecular clock and independent origins for the cholera pandemic clones.</title>
        <authorList>
            <person name="Feng L."/>
            <person name="Reeves P.R."/>
            <person name="Lan R."/>
            <person name="Ren Y."/>
            <person name="Gao C."/>
            <person name="Zhou Z."/>
            <person name="Ren Y."/>
            <person name="Cheng J."/>
            <person name="Wang W."/>
            <person name="Wang J."/>
            <person name="Qian W."/>
            <person name="Li D."/>
            <person name="Wang L."/>
        </authorList>
    </citation>
    <scope>NUCLEOTIDE SEQUENCE [LARGE SCALE GENOMIC DNA]</scope>
    <source>
        <strain>ATCC 39541 / Classical Ogawa 395 / O395</strain>
    </source>
</reference>